<protein>
    <recommendedName>
        <fullName evidence="1">Protein GrpE</fullName>
    </recommendedName>
    <alternativeName>
        <fullName evidence="1">HSP-70 cofactor</fullName>
    </alternativeName>
</protein>
<organism>
    <name type="scientific">Streptococcus pneumoniae (strain ATCC 700669 / Spain 23F-1)</name>
    <dbReference type="NCBI Taxonomy" id="561276"/>
    <lineage>
        <taxon>Bacteria</taxon>
        <taxon>Bacillati</taxon>
        <taxon>Bacillota</taxon>
        <taxon>Bacilli</taxon>
        <taxon>Lactobacillales</taxon>
        <taxon>Streptococcaceae</taxon>
        <taxon>Streptococcus</taxon>
    </lineage>
</organism>
<feature type="chain" id="PRO_1000164219" description="Protein GrpE">
    <location>
        <begin position="1"/>
        <end position="174"/>
    </location>
</feature>
<feature type="region of interest" description="Disordered" evidence="2">
    <location>
        <begin position="1"/>
        <end position="35"/>
    </location>
</feature>
<feature type="compositionally biased region" description="Acidic residues" evidence="2">
    <location>
        <begin position="9"/>
        <end position="25"/>
    </location>
</feature>
<feature type="compositionally biased region" description="Basic and acidic residues" evidence="2">
    <location>
        <begin position="26"/>
        <end position="35"/>
    </location>
</feature>
<reference key="1">
    <citation type="journal article" date="2009" name="J. Bacteriol.">
        <title>Role of conjugative elements in the evolution of the multidrug-resistant pandemic clone Streptococcus pneumoniae Spain23F ST81.</title>
        <authorList>
            <person name="Croucher N.J."/>
            <person name="Walker D."/>
            <person name="Romero P."/>
            <person name="Lennard N."/>
            <person name="Paterson G.K."/>
            <person name="Bason N.C."/>
            <person name="Mitchell A.M."/>
            <person name="Quail M.A."/>
            <person name="Andrew P.W."/>
            <person name="Parkhill J."/>
            <person name="Bentley S.D."/>
            <person name="Mitchell T.J."/>
        </authorList>
    </citation>
    <scope>NUCLEOTIDE SEQUENCE [LARGE SCALE GENOMIC DNA]</scope>
    <source>
        <strain>ATCC 700669 / Spain 23F-1</strain>
    </source>
</reference>
<accession>B8ZLY8</accession>
<gene>
    <name evidence="1" type="primary">grpE</name>
    <name type="ordered locus">SPN23F04670</name>
</gene>
<name>GRPE_STRPJ</name>
<proteinExistence type="inferred from homology"/>
<keyword id="KW-0143">Chaperone</keyword>
<keyword id="KW-0963">Cytoplasm</keyword>
<keyword id="KW-0346">Stress response</keyword>
<sequence length="174" mass="19969">MAQDIKNEEVEEVQEEEVVETAEETTPEKSELDLANERADEFENKYLRAHAEMQNIQRRANEERQNLQRYRSQDLAKAILPSLDNLERALAVEGLTDDVKKGLGMVQESLIHALKEEGIEEIAADGEFDHNYHMAIQTLPADDEHPVDTIAQVFQKGYKLHDRILRPAMVVVYN</sequence>
<dbReference type="EMBL" id="FM211187">
    <property type="protein sequence ID" value="CAR68312.1"/>
    <property type="molecule type" value="Genomic_DNA"/>
</dbReference>
<dbReference type="RefSeq" id="WP_000046031.1">
    <property type="nucleotide sequence ID" value="NC_011900.1"/>
</dbReference>
<dbReference type="SMR" id="B8ZLY8"/>
<dbReference type="GeneID" id="45654056"/>
<dbReference type="KEGG" id="sne:SPN23F04670"/>
<dbReference type="HOGENOM" id="CLU_057217_6_3_9"/>
<dbReference type="GO" id="GO:0005737">
    <property type="term" value="C:cytoplasm"/>
    <property type="evidence" value="ECO:0007669"/>
    <property type="project" value="UniProtKB-SubCell"/>
</dbReference>
<dbReference type="GO" id="GO:0000774">
    <property type="term" value="F:adenyl-nucleotide exchange factor activity"/>
    <property type="evidence" value="ECO:0007669"/>
    <property type="project" value="InterPro"/>
</dbReference>
<dbReference type="GO" id="GO:0042803">
    <property type="term" value="F:protein homodimerization activity"/>
    <property type="evidence" value="ECO:0007669"/>
    <property type="project" value="InterPro"/>
</dbReference>
<dbReference type="GO" id="GO:0051087">
    <property type="term" value="F:protein-folding chaperone binding"/>
    <property type="evidence" value="ECO:0007669"/>
    <property type="project" value="InterPro"/>
</dbReference>
<dbReference type="GO" id="GO:0051082">
    <property type="term" value="F:unfolded protein binding"/>
    <property type="evidence" value="ECO:0007669"/>
    <property type="project" value="TreeGrafter"/>
</dbReference>
<dbReference type="GO" id="GO:0006457">
    <property type="term" value="P:protein folding"/>
    <property type="evidence" value="ECO:0007669"/>
    <property type="project" value="InterPro"/>
</dbReference>
<dbReference type="CDD" id="cd00446">
    <property type="entry name" value="GrpE"/>
    <property type="match status" value="1"/>
</dbReference>
<dbReference type="FunFam" id="2.30.22.10:FF:000004">
    <property type="entry name" value="Protein GrpE"/>
    <property type="match status" value="1"/>
</dbReference>
<dbReference type="FunFam" id="3.90.20.20:FF:000007">
    <property type="entry name" value="Protein GrpE"/>
    <property type="match status" value="1"/>
</dbReference>
<dbReference type="Gene3D" id="3.90.20.20">
    <property type="match status" value="1"/>
</dbReference>
<dbReference type="Gene3D" id="2.30.22.10">
    <property type="entry name" value="Head domain of nucleotide exchange factor GrpE"/>
    <property type="match status" value="1"/>
</dbReference>
<dbReference type="HAMAP" id="MF_01151">
    <property type="entry name" value="GrpE"/>
    <property type="match status" value="1"/>
</dbReference>
<dbReference type="InterPro" id="IPR000740">
    <property type="entry name" value="GrpE"/>
</dbReference>
<dbReference type="InterPro" id="IPR013805">
    <property type="entry name" value="GrpE_coiled_coil"/>
</dbReference>
<dbReference type="InterPro" id="IPR009012">
    <property type="entry name" value="GrpE_head"/>
</dbReference>
<dbReference type="NCBIfam" id="NF010738">
    <property type="entry name" value="PRK14140.1"/>
    <property type="match status" value="1"/>
</dbReference>
<dbReference type="NCBIfam" id="NF010753">
    <property type="entry name" value="PRK14156.1"/>
    <property type="match status" value="1"/>
</dbReference>
<dbReference type="NCBIfam" id="NF010759">
    <property type="entry name" value="PRK14162.1"/>
    <property type="match status" value="1"/>
</dbReference>
<dbReference type="PANTHER" id="PTHR21237">
    <property type="entry name" value="GRPE PROTEIN"/>
    <property type="match status" value="1"/>
</dbReference>
<dbReference type="PANTHER" id="PTHR21237:SF23">
    <property type="entry name" value="GRPE PROTEIN HOMOLOG, MITOCHONDRIAL"/>
    <property type="match status" value="1"/>
</dbReference>
<dbReference type="Pfam" id="PF01025">
    <property type="entry name" value="GrpE"/>
    <property type="match status" value="1"/>
</dbReference>
<dbReference type="PRINTS" id="PR00773">
    <property type="entry name" value="GRPEPROTEIN"/>
</dbReference>
<dbReference type="SUPFAM" id="SSF58014">
    <property type="entry name" value="Coiled-coil domain of nucleotide exchange factor GrpE"/>
    <property type="match status" value="1"/>
</dbReference>
<dbReference type="SUPFAM" id="SSF51064">
    <property type="entry name" value="Head domain of nucleotide exchange factor GrpE"/>
    <property type="match status" value="1"/>
</dbReference>
<dbReference type="PROSITE" id="PS01071">
    <property type="entry name" value="GRPE"/>
    <property type="match status" value="1"/>
</dbReference>
<evidence type="ECO:0000255" key="1">
    <source>
        <dbReference type="HAMAP-Rule" id="MF_01151"/>
    </source>
</evidence>
<evidence type="ECO:0000256" key="2">
    <source>
        <dbReference type="SAM" id="MobiDB-lite"/>
    </source>
</evidence>
<comment type="function">
    <text evidence="1">Participates actively in the response to hyperosmotic and heat shock by preventing the aggregation of stress-denatured proteins, in association with DnaK and GrpE. It is the nucleotide exchange factor for DnaK and may function as a thermosensor. Unfolded proteins bind initially to DnaJ; upon interaction with the DnaJ-bound protein, DnaK hydrolyzes its bound ATP, resulting in the formation of a stable complex. GrpE releases ADP from DnaK; ATP binding to DnaK triggers the release of the substrate protein, thus completing the reaction cycle. Several rounds of ATP-dependent interactions between DnaJ, DnaK and GrpE are required for fully efficient folding.</text>
</comment>
<comment type="subunit">
    <text evidence="1">Homodimer.</text>
</comment>
<comment type="subcellular location">
    <subcellularLocation>
        <location evidence="1">Cytoplasm</location>
    </subcellularLocation>
</comment>
<comment type="similarity">
    <text evidence="1">Belongs to the GrpE family.</text>
</comment>